<dbReference type="EC" id="2.8.1.13" evidence="1"/>
<dbReference type="EMBL" id="AM746676">
    <property type="protein sequence ID" value="CAN97466.1"/>
    <property type="molecule type" value="Genomic_DNA"/>
</dbReference>
<dbReference type="RefSeq" id="WP_012239905.1">
    <property type="nucleotide sequence ID" value="NC_010162.1"/>
</dbReference>
<dbReference type="SMR" id="A9EXM5"/>
<dbReference type="STRING" id="448385.sce7297"/>
<dbReference type="KEGG" id="scl:sce7297"/>
<dbReference type="eggNOG" id="COG0482">
    <property type="taxonomic scope" value="Bacteria"/>
</dbReference>
<dbReference type="HOGENOM" id="CLU_035188_0_0_7"/>
<dbReference type="OrthoDB" id="9800696at2"/>
<dbReference type="BioCyc" id="SCEL448385:SCE_RS37380-MONOMER"/>
<dbReference type="Proteomes" id="UP000002139">
    <property type="component" value="Chromosome"/>
</dbReference>
<dbReference type="GO" id="GO:0005737">
    <property type="term" value="C:cytoplasm"/>
    <property type="evidence" value="ECO:0007669"/>
    <property type="project" value="UniProtKB-SubCell"/>
</dbReference>
<dbReference type="GO" id="GO:0005524">
    <property type="term" value="F:ATP binding"/>
    <property type="evidence" value="ECO:0007669"/>
    <property type="project" value="UniProtKB-KW"/>
</dbReference>
<dbReference type="GO" id="GO:0000049">
    <property type="term" value="F:tRNA binding"/>
    <property type="evidence" value="ECO:0007669"/>
    <property type="project" value="UniProtKB-KW"/>
</dbReference>
<dbReference type="GO" id="GO:0103016">
    <property type="term" value="F:tRNA-uridine 2-sulfurtransferase activity"/>
    <property type="evidence" value="ECO:0007669"/>
    <property type="project" value="UniProtKB-EC"/>
</dbReference>
<dbReference type="GO" id="GO:0002143">
    <property type="term" value="P:tRNA wobble position uridine thiolation"/>
    <property type="evidence" value="ECO:0007669"/>
    <property type="project" value="TreeGrafter"/>
</dbReference>
<dbReference type="CDD" id="cd01998">
    <property type="entry name" value="MnmA_TRMU-like"/>
    <property type="match status" value="1"/>
</dbReference>
<dbReference type="Gene3D" id="2.30.30.280">
    <property type="entry name" value="Adenine nucleotide alpha hydrolases-like domains"/>
    <property type="match status" value="1"/>
</dbReference>
<dbReference type="Gene3D" id="3.40.50.620">
    <property type="entry name" value="HUPs"/>
    <property type="match status" value="1"/>
</dbReference>
<dbReference type="Gene3D" id="2.40.30.10">
    <property type="entry name" value="Translation factors"/>
    <property type="match status" value="1"/>
</dbReference>
<dbReference type="HAMAP" id="MF_00144">
    <property type="entry name" value="tRNA_thiouridyl_MnmA"/>
    <property type="match status" value="1"/>
</dbReference>
<dbReference type="InterPro" id="IPR004506">
    <property type="entry name" value="MnmA-like"/>
</dbReference>
<dbReference type="InterPro" id="IPR046885">
    <property type="entry name" value="MnmA-like_C"/>
</dbReference>
<dbReference type="InterPro" id="IPR046884">
    <property type="entry name" value="MnmA-like_central"/>
</dbReference>
<dbReference type="InterPro" id="IPR023382">
    <property type="entry name" value="MnmA-like_central_sf"/>
</dbReference>
<dbReference type="InterPro" id="IPR014729">
    <property type="entry name" value="Rossmann-like_a/b/a_fold"/>
</dbReference>
<dbReference type="NCBIfam" id="NF001138">
    <property type="entry name" value="PRK00143.1"/>
    <property type="match status" value="1"/>
</dbReference>
<dbReference type="NCBIfam" id="TIGR00420">
    <property type="entry name" value="trmU"/>
    <property type="match status" value="1"/>
</dbReference>
<dbReference type="PANTHER" id="PTHR11933:SF5">
    <property type="entry name" value="MITOCHONDRIAL TRNA-SPECIFIC 2-THIOURIDYLASE 1"/>
    <property type="match status" value="1"/>
</dbReference>
<dbReference type="PANTHER" id="PTHR11933">
    <property type="entry name" value="TRNA 5-METHYLAMINOMETHYL-2-THIOURIDYLATE -METHYLTRANSFERASE"/>
    <property type="match status" value="1"/>
</dbReference>
<dbReference type="Pfam" id="PF03054">
    <property type="entry name" value="tRNA_Me_trans"/>
    <property type="match status" value="1"/>
</dbReference>
<dbReference type="Pfam" id="PF20258">
    <property type="entry name" value="tRNA_Me_trans_C"/>
    <property type="match status" value="1"/>
</dbReference>
<dbReference type="Pfam" id="PF20259">
    <property type="entry name" value="tRNA_Me_trans_M"/>
    <property type="match status" value="1"/>
</dbReference>
<dbReference type="SUPFAM" id="SSF52402">
    <property type="entry name" value="Adenine nucleotide alpha hydrolases-like"/>
    <property type="match status" value="1"/>
</dbReference>
<organism>
    <name type="scientific">Sorangium cellulosum (strain So ce56)</name>
    <name type="common">Polyangium cellulosum (strain So ce56)</name>
    <dbReference type="NCBI Taxonomy" id="448385"/>
    <lineage>
        <taxon>Bacteria</taxon>
        <taxon>Pseudomonadati</taxon>
        <taxon>Myxococcota</taxon>
        <taxon>Polyangia</taxon>
        <taxon>Polyangiales</taxon>
        <taxon>Polyangiaceae</taxon>
        <taxon>Sorangium</taxon>
    </lineage>
</organism>
<protein>
    <recommendedName>
        <fullName evidence="1">tRNA-specific 2-thiouridylase MnmA</fullName>
        <ecNumber evidence="1">2.8.1.13</ecNumber>
    </recommendedName>
</protein>
<name>MNMA_SORC5</name>
<sequence length="385" mass="41406">MATLVREADGTARPGERPSSGARVFIAMSGGVDSSVAAARLCDAGYEVVGVTLHLWDYPDDGSVKSRCCAPEDQHDARRVADHLGIPHYTFDRRALFREHVVDPFVEAYLAGETPSPCVACNRSVKLRELFPLAERLGVSWVATGHYARVVLEEGGARLYRGRDRHKDQSYFLHMLRSDELSRLLFPLGDSTKDEVRAEAIARGLPGAEKGESQELCFIPSGRYAPFVADRAADRLRPGPIVDRDGRVVGSHGGVHGFTVGQRKGIGVSLGRPAFVVGLDAASGAVHLGDEGDLYAAGAEIADAVWCDDAVFPLEAEVRVRARHEAAPGIIERRRDPATGAESFVARFASPVRSVSPGQMAVVYRGDRVLGGGRIKAALRSQAAS</sequence>
<comment type="function">
    <text evidence="1">Catalyzes the 2-thiolation of uridine at the wobble position (U34) of tRNA, leading to the formation of s(2)U34.</text>
</comment>
<comment type="catalytic activity">
    <reaction evidence="1">
        <text>S-sulfanyl-L-cysteinyl-[protein] + uridine(34) in tRNA + AH2 + ATP = 2-thiouridine(34) in tRNA + L-cysteinyl-[protein] + A + AMP + diphosphate + H(+)</text>
        <dbReference type="Rhea" id="RHEA:47032"/>
        <dbReference type="Rhea" id="RHEA-COMP:10131"/>
        <dbReference type="Rhea" id="RHEA-COMP:11726"/>
        <dbReference type="Rhea" id="RHEA-COMP:11727"/>
        <dbReference type="Rhea" id="RHEA-COMP:11728"/>
        <dbReference type="ChEBI" id="CHEBI:13193"/>
        <dbReference type="ChEBI" id="CHEBI:15378"/>
        <dbReference type="ChEBI" id="CHEBI:17499"/>
        <dbReference type="ChEBI" id="CHEBI:29950"/>
        <dbReference type="ChEBI" id="CHEBI:30616"/>
        <dbReference type="ChEBI" id="CHEBI:33019"/>
        <dbReference type="ChEBI" id="CHEBI:61963"/>
        <dbReference type="ChEBI" id="CHEBI:65315"/>
        <dbReference type="ChEBI" id="CHEBI:87170"/>
        <dbReference type="ChEBI" id="CHEBI:456215"/>
        <dbReference type="EC" id="2.8.1.13"/>
    </reaction>
</comment>
<comment type="subcellular location">
    <subcellularLocation>
        <location evidence="1">Cytoplasm</location>
    </subcellularLocation>
</comment>
<comment type="similarity">
    <text evidence="1">Belongs to the MnmA/TRMU family.</text>
</comment>
<evidence type="ECO:0000255" key="1">
    <source>
        <dbReference type="HAMAP-Rule" id="MF_00144"/>
    </source>
</evidence>
<accession>A9EXM5</accession>
<reference key="1">
    <citation type="journal article" date="2007" name="Nat. Biotechnol.">
        <title>Complete genome sequence of the myxobacterium Sorangium cellulosum.</title>
        <authorList>
            <person name="Schneiker S."/>
            <person name="Perlova O."/>
            <person name="Kaiser O."/>
            <person name="Gerth K."/>
            <person name="Alici A."/>
            <person name="Altmeyer M.O."/>
            <person name="Bartels D."/>
            <person name="Bekel T."/>
            <person name="Beyer S."/>
            <person name="Bode E."/>
            <person name="Bode H.B."/>
            <person name="Bolten C.J."/>
            <person name="Choudhuri J.V."/>
            <person name="Doss S."/>
            <person name="Elnakady Y.A."/>
            <person name="Frank B."/>
            <person name="Gaigalat L."/>
            <person name="Goesmann A."/>
            <person name="Groeger C."/>
            <person name="Gross F."/>
            <person name="Jelsbak L."/>
            <person name="Jelsbak L."/>
            <person name="Kalinowski J."/>
            <person name="Kegler C."/>
            <person name="Knauber T."/>
            <person name="Konietzny S."/>
            <person name="Kopp M."/>
            <person name="Krause L."/>
            <person name="Krug D."/>
            <person name="Linke B."/>
            <person name="Mahmud T."/>
            <person name="Martinez-Arias R."/>
            <person name="McHardy A.C."/>
            <person name="Merai M."/>
            <person name="Meyer F."/>
            <person name="Mormann S."/>
            <person name="Munoz-Dorado J."/>
            <person name="Perez J."/>
            <person name="Pradella S."/>
            <person name="Rachid S."/>
            <person name="Raddatz G."/>
            <person name="Rosenau F."/>
            <person name="Rueckert C."/>
            <person name="Sasse F."/>
            <person name="Scharfe M."/>
            <person name="Schuster S.C."/>
            <person name="Suen G."/>
            <person name="Treuner-Lange A."/>
            <person name="Velicer G.J."/>
            <person name="Vorholter F.-J."/>
            <person name="Weissman K.J."/>
            <person name="Welch R.D."/>
            <person name="Wenzel S.C."/>
            <person name="Whitworth D.E."/>
            <person name="Wilhelm S."/>
            <person name="Wittmann C."/>
            <person name="Bloecker H."/>
            <person name="Puehler A."/>
            <person name="Mueller R."/>
        </authorList>
    </citation>
    <scope>NUCLEOTIDE SEQUENCE [LARGE SCALE GENOMIC DNA]</scope>
    <source>
        <strain>So ce56</strain>
    </source>
</reference>
<proteinExistence type="inferred from homology"/>
<keyword id="KW-0067">ATP-binding</keyword>
<keyword id="KW-0963">Cytoplasm</keyword>
<keyword id="KW-1015">Disulfide bond</keyword>
<keyword id="KW-0547">Nucleotide-binding</keyword>
<keyword id="KW-1185">Reference proteome</keyword>
<keyword id="KW-0694">RNA-binding</keyword>
<keyword id="KW-0808">Transferase</keyword>
<keyword id="KW-0819">tRNA processing</keyword>
<keyword id="KW-0820">tRNA-binding</keyword>
<gene>
    <name evidence="1" type="primary">mnmA</name>
    <name type="ordered locus">sce7297</name>
</gene>
<feature type="chain" id="PRO_0000349803" description="tRNA-specific 2-thiouridylase MnmA">
    <location>
        <begin position="1"/>
        <end position="385"/>
    </location>
</feature>
<feature type="region of interest" description="Interaction with tRNA" evidence="1">
    <location>
        <begin position="167"/>
        <end position="169"/>
    </location>
</feature>
<feature type="active site" description="Nucleophile" evidence="1">
    <location>
        <position position="121"/>
    </location>
</feature>
<feature type="active site" description="Cysteine persulfide intermediate" evidence="1">
    <location>
        <position position="217"/>
    </location>
</feature>
<feature type="binding site" evidence="1">
    <location>
        <begin position="27"/>
        <end position="34"/>
    </location>
    <ligand>
        <name>ATP</name>
        <dbReference type="ChEBI" id="CHEBI:30616"/>
    </ligand>
</feature>
<feature type="binding site" evidence="1">
    <location>
        <position position="53"/>
    </location>
    <ligand>
        <name>ATP</name>
        <dbReference type="ChEBI" id="CHEBI:30616"/>
    </ligand>
</feature>
<feature type="binding site" evidence="1">
    <location>
        <position position="145"/>
    </location>
    <ligand>
        <name>ATP</name>
        <dbReference type="ChEBI" id="CHEBI:30616"/>
    </ligand>
</feature>
<feature type="site" description="Interaction with tRNA" evidence="1">
    <location>
        <position position="146"/>
    </location>
</feature>
<feature type="site" description="Interaction with tRNA" evidence="1">
    <location>
        <position position="359"/>
    </location>
</feature>
<feature type="disulfide bond" description="Alternate" evidence="1">
    <location>
        <begin position="121"/>
        <end position="217"/>
    </location>
</feature>